<keyword id="KW-0067">ATP-binding</keyword>
<keyword id="KW-0238">DNA-binding</keyword>
<keyword id="KW-0479">Metal-binding</keyword>
<keyword id="KW-0547">Nucleotide-binding</keyword>
<keyword id="KW-1185">Reference proteome</keyword>
<keyword id="KW-0678">Repressor</keyword>
<keyword id="KW-0804">Transcription</keyword>
<keyword id="KW-0805">Transcription regulation</keyword>
<keyword id="KW-0862">Zinc</keyword>
<keyword id="KW-0863">Zinc-finger</keyword>
<reference key="1">
    <citation type="journal article" date="2011" name="Stand. Genomic Sci.">
        <title>Complete genome sequence of the halophilic and highly halotolerant Chromohalobacter salexigens type strain (1H11(T)).</title>
        <authorList>
            <person name="Copeland A."/>
            <person name="O'Connor K."/>
            <person name="Lucas S."/>
            <person name="Lapidus A."/>
            <person name="Berry K.W."/>
            <person name="Detter J.C."/>
            <person name="Del Rio T.G."/>
            <person name="Hammon N."/>
            <person name="Dalin E."/>
            <person name="Tice H."/>
            <person name="Pitluck S."/>
            <person name="Bruce D."/>
            <person name="Goodwin L."/>
            <person name="Han C."/>
            <person name="Tapia R."/>
            <person name="Saunders E."/>
            <person name="Schmutz J."/>
            <person name="Brettin T."/>
            <person name="Larimer F."/>
            <person name="Land M."/>
            <person name="Hauser L."/>
            <person name="Vargas C."/>
            <person name="Nieto J.J."/>
            <person name="Kyrpides N.C."/>
            <person name="Ivanova N."/>
            <person name="Goker M."/>
            <person name="Klenk H.P."/>
            <person name="Csonka L.N."/>
            <person name="Woyke T."/>
        </authorList>
    </citation>
    <scope>NUCLEOTIDE SEQUENCE [LARGE SCALE GENOMIC DNA]</scope>
    <source>
        <strain>ATCC BAA-138 / DSM 3043 / CIP 106854 / NCIMB 13768 / 1H11</strain>
    </source>
</reference>
<feature type="chain" id="PRO_0000264167" description="Transcriptional repressor NrdR">
    <location>
        <begin position="1"/>
        <end position="161"/>
    </location>
</feature>
<feature type="domain" description="ATP-cone" evidence="1">
    <location>
        <begin position="49"/>
        <end position="139"/>
    </location>
</feature>
<feature type="zinc finger region" evidence="1">
    <location>
        <begin position="3"/>
        <end position="34"/>
    </location>
</feature>
<evidence type="ECO:0000255" key="1">
    <source>
        <dbReference type="HAMAP-Rule" id="MF_00440"/>
    </source>
</evidence>
<protein>
    <recommendedName>
        <fullName evidence="1">Transcriptional repressor NrdR</fullName>
    </recommendedName>
</protein>
<dbReference type="EMBL" id="CP000285">
    <property type="protein sequence ID" value="ABE59933.1"/>
    <property type="molecule type" value="Genomic_DNA"/>
</dbReference>
<dbReference type="RefSeq" id="WP_011507879.1">
    <property type="nucleotide sequence ID" value="NC_007963.1"/>
</dbReference>
<dbReference type="SMR" id="Q1QUC5"/>
<dbReference type="STRING" id="290398.Csal_2586"/>
<dbReference type="GeneID" id="95335287"/>
<dbReference type="KEGG" id="csa:Csal_2586"/>
<dbReference type="eggNOG" id="COG1327">
    <property type="taxonomic scope" value="Bacteria"/>
</dbReference>
<dbReference type="HOGENOM" id="CLU_108412_0_0_6"/>
<dbReference type="OrthoDB" id="9807461at2"/>
<dbReference type="Proteomes" id="UP000000239">
    <property type="component" value="Chromosome"/>
</dbReference>
<dbReference type="GO" id="GO:0005524">
    <property type="term" value="F:ATP binding"/>
    <property type="evidence" value="ECO:0007669"/>
    <property type="project" value="UniProtKB-KW"/>
</dbReference>
<dbReference type="GO" id="GO:0003677">
    <property type="term" value="F:DNA binding"/>
    <property type="evidence" value="ECO:0007669"/>
    <property type="project" value="UniProtKB-KW"/>
</dbReference>
<dbReference type="GO" id="GO:0008270">
    <property type="term" value="F:zinc ion binding"/>
    <property type="evidence" value="ECO:0007669"/>
    <property type="project" value="UniProtKB-UniRule"/>
</dbReference>
<dbReference type="GO" id="GO:0045892">
    <property type="term" value="P:negative regulation of DNA-templated transcription"/>
    <property type="evidence" value="ECO:0007669"/>
    <property type="project" value="UniProtKB-UniRule"/>
</dbReference>
<dbReference type="HAMAP" id="MF_00440">
    <property type="entry name" value="NrdR"/>
    <property type="match status" value="1"/>
</dbReference>
<dbReference type="InterPro" id="IPR005144">
    <property type="entry name" value="ATP-cone_dom"/>
</dbReference>
<dbReference type="InterPro" id="IPR055173">
    <property type="entry name" value="NrdR-like_N"/>
</dbReference>
<dbReference type="InterPro" id="IPR003796">
    <property type="entry name" value="RNR_NrdR-like"/>
</dbReference>
<dbReference type="NCBIfam" id="TIGR00244">
    <property type="entry name" value="transcriptional regulator NrdR"/>
    <property type="match status" value="1"/>
</dbReference>
<dbReference type="PANTHER" id="PTHR30455">
    <property type="entry name" value="TRANSCRIPTIONAL REPRESSOR NRDR"/>
    <property type="match status" value="1"/>
</dbReference>
<dbReference type="PANTHER" id="PTHR30455:SF2">
    <property type="entry name" value="TRANSCRIPTIONAL REPRESSOR NRDR"/>
    <property type="match status" value="1"/>
</dbReference>
<dbReference type="Pfam" id="PF03477">
    <property type="entry name" value="ATP-cone"/>
    <property type="match status" value="1"/>
</dbReference>
<dbReference type="Pfam" id="PF22811">
    <property type="entry name" value="Zn_ribbon_NrdR"/>
    <property type="match status" value="1"/>
</dbReference>
<dbReference type="PROSITE" id="PS51161">
    <property type="entry name" value="ATP_CONE"/>
    <property type="match status" value="1"/>
</dbReference>
<proteinExistence type="inferred from homology"/>
<accession>Q1QUC5</accession>
<sequence length="161" mass="18877">MHCPFCGKYDTKVTDSRLVAEGDQVRRRRQCNDCGERFTTYETAELVMPRVIKGDGSRETFDERKLRAGMLRALEKRPVSAESIEAAVERIRQRLRARGEREIEAREIGEEVMRSLKRLDQVAYIRFASVYRRFQDLDEFRAEIDRLAQEPSFSPDDADKR</sequence>
<gene>
    <name evidence="1" type="primary">nrdR</name>
    <name type="ordered locus">Csal_2586</name>
</gene>
<organism>
    <name type="scientific">Chromohalobacter salexigens (strain ATCC BAA-138 / DSM 3043 / CIP 106854 / NCIMB 13768 / 1H11)</name>
    <dbReference type="NCBI Taxonomy" id="290398"/>
    <lineage>
        <taxon>Bacteria</taxon>
        <taxon>Pseudomonadati</taxon>
        <taxon>Pseudomonadota</taxon>
        <taxon>Gammaproteobacteria</taxon>
        <taxon>Oceanospirillales</taxon>
        <taxon>Halomonadaceae</taxon>
        <taxon>Chromohalobacter</taxon>
    </lineage>
</organism>
<comment type="function">
    <text evidence="1">Negatively regulates transcription of bacterial ribonucleotide reductase nrd genes and operons by binding to NrdR-boxes.</text>
</comment>
<comment type="cofactor">
    <cofactor evidence="1">
        <name>Zn(2+)</name>
        <dbReference type="ChEBI" id="CHEBI:29105"/>
    </cofactor>
    <text evidence="1">Binds 1 zinc ion.</text>
</comment>
<comment type="similarity">
    <text evidence="1">Belongs to the NrdR family.</text>
</comment>
<name>NRDR_CHRSD</name>